<feature type="chain" id="PRO_0000155407" description="Colostrum trypsin inhibitor">
    <location>
        <begin position="1"/>
        <end position="67"/>
    </location>
</feature>
<feature type="domain" description="BPTI/Kunitz inhibitor" evidence="1">
    <location>
        <begin position="8"/>
        <end position="58"/>
    </location>
</feature>
<feature type="site" description="Reactive bond for trypsin">
    <location>
        <begin position="18"/>
        <end position="19"/>
    </location>
</feature>
<feature type="glycosylation site" description="N-linked (GlcNAc...) asparagine">
    <location>
        <position position="27"/>
    </location>
</feature>
<feature type="disulfide bond" evidence="1 2">
    <location>
        <begin position="8"/>
        <end position="58"/>
    </location>
</feature>
<feature type="disulfide bond" evidence="1 2">
    <location>
        <begin position="17"/>
        <end position="41"/>
    </location>
</feature>
<feature type="disulfide bond" evidence="1 2">
    <location>
        <begin position="33"/>
        <end position="54"/>
    </location>
</feature>
<dbReference type="PIR" id="A01207">
    <property type="entry name" value="TIBOC"/>
</dbReference>
<dbReference type="FunCoup" id="P00976">
    <property type="interactions" value="18"/>
</dbReference>
<dbReference type="STRING" id="9913.ENSBTAP00000062774"/>
<dbReference type="MEROPS" id="I02.003"/>
<dbReference type="GlyGen" id="P00976">
    <property type="glycosylation" value="1 site"/>
</dbReference>
<dbReference type="InParanoid" id="P00976"/>
<dbReference type="Proteomes" id="UP000009136">
    <property type="component" value="Unplaced"/>
</dbReference>
<dbReference type="GO" id="GO:0005615">
    <property type="term" value="C:extracellular space"/>
    <property type="evidence" value="ECO:0000318"/>
    <property type="project" value="GO_Central"/>
</dbReference>
<dbReference type="GO" id="GO:0004867">
    <property type="term" value="F:serine-type endopeptidase inhibitor activity"/>
    <property type="evidence" value="ECO:0000318"/>
    <property type="project" value="GO_Central"/>
</dbReference>
<dbReference type="CDD" id="cd22632">
    <property type="entry name" value="Kunitz_ELP-like"/>
    <property type="match status" value="1"/>
</dbReference>
<dbReference type="FunFam" id="4.10.410.10:FF:000015">
    <property type="entry name" value="WAP four-disulfide core domain 6A"/>
    <property type="match status" value="1"/>
</dbReference>
<dbReference type="Gene3D" id="4.10.410.10">
    <property type="entry name" value="Pancreatic trypsin inhibitor Kunitz domain"/>
    <property type="match status" value="1"/>
</dbReference>
<dbReference type="InterPro" id="IPR002223">
    <property type="entry name" value="Kunitz_BPTI"/>
</dbReference>
<dbReference type="InterPro" id="IPR036880">
    <property type="entry name" value="Kunitz_BPTI_sf"/>
</dbReference>
<dbReference type="InterPro" id="IPR020901">
    <property type="entry name" value="Prtase_inh_Kunz-CS"/>
</dbReference>
<dbReference type="InterPro" id="IPR050098">
    <property type="entry name" value="TFPI/VKTCI-like"/>
</dbReference>
<dbReference type="PANTHER" id="PTHR10083:SF380">
    <property type="entry name" value="COLOSTRUM TRYPSIN INHIBITOR"/>
    <property type="match status" value="1"/>
</dbReference>
<dbReference type="PANTHER" id="PTHR10083">
    <property type="entry name" value="KUNITZ-TYPE PROTEASE INHIBITOR-RELATED"/>
    <property type="match status" value="1"/>
</dbReference>
<dbReference type="Pfam" id="PF00014">
    <property type="entry name" value="Kunitz_BPTI"/>
    <property type="match status" value="1"/>
</dbReference>
<dbReference type="PRINTS" id="PR00759">
    <property type="entry name" value="BASICPTASE"/>
</dbReference>
<dbReference type="SMART" id="SM00131">
    <property type="entry name" value="KU"/>
    <property type="match status" value="1"/>
</dbReference>
<dbReference type="SUPFAM" id="SSF57362">
    <property type="entry name" value="BPTI-like"/>
    <property type="match status" value="1"/>
</dbReference>
<dbReference type="PROSITE" id="PS00280">
    <property type="entry name" value="BPTI_KUNITZ_1"/>
    <property type="match status" value="1"/>
</dbReference>
<dbReference type="PROSITE" id="PS50279">
    <property type="entry name" value="BPTI_KUNITZ_2"/>
    <property type="match status" value="1"/>
</dbReference>
<organism>
    <name type="scientific">Bos taurus</name>
    <name type="common">Bovine</name>
    <dbReference type="NCBI Taxonomy" id="9913"/>
    <lineage>
        <taxon>Eukaryota</taxon>
        <taxon>Metazoa</taxon>
        <taxon>Chordata</taxon>
        <taxon>Craniata</taxon>
        <taxon>Vertebrata</taxon>
        <taxon>Euteleostomi</taxon>
        <taxon>Mammalia</taxon>
        <taxon>Eutheria</taxon>
        <taxon>Laurasiatheria</taxon>
        <taxon>Artiodactyla</taxon>
        <taxon>Ruminantia</taxon>
        <taxon>Pecora</taxon>
        <taxon>Bovidae</taxon>
        <taxon>Bovinae</taxon>
        <taxon>Bos</taxon>
    </lineage>
</organism>
<evidence type="ECO:0000255" key="1">
    <source>
        <dbReference type="PROSITE-ProRule" id="PRU00031"/>
    </source>
</evidence>
<evidence type="ECO:0000269" key="2">
    <source ref="2"/>
</evidence>
<protein>
    <recommendedName>
        <fullName>Colostrum trypsin inhibitor</fullName>
    </recommendedName>
    <alternativeName>
        <fullName>Colostrum BPI</fullName>
    </alternativeName>
</protein>
<sequence length="67" mass="7511">FQTPPDLCQLPQARGPCKAALLRYFYNSTSNACEPFTYGGCQGNNBNFETTEMCLRICEPPQQTDKS</sequence>
<accession>P00976</accession>
<proteinExistence type="evidence at protein level"/>
<comment type="subcellular location">
    <subcellularLocation>
        <location>Secreted</location>
    </subcellularLocation>
</comment>
<keyword id="KW-0903">Direct protein sequencing</keyword>
<keyword id="KW-1015">Disulfide bond</keyword>
<keyword id="KW-0325">Glycoprotein</keyword>
<keyword id="KW-0646">Protease inhibitor</keyword>
<keyword id="KW-1185">Reference proteome</keyword>
<keyword id="KW-0964">Secreted</keyword>
<keyword id="KW-0722">Serine protease inhibitor</keyword>
<reference key="1">
    <citation type="journal article" date="1971" name="Collect. Czech. Chem. Commun.">
        <title>Primary structure of trypsin inhibitor from cow colostrum (component B2).</title>
        <authorList>
            <person name="Cechova D."/>
            <person name="Jonakova V."/>
            <person name="Sorm F."/>
        </authorList>
    </citation>
    <scope>PROTEIN SEQUENCE</scope>
</reference>
<reference key="2">
    <citation type="journal article" date="1974" name="Collect. Czech. Chem. Commun.">
        <title>Disulfide bonds of trypsin inhibitor from cow colostrum.</title>
        <authorList>
            <person name="Cechova D."/>
            <person name="Ber E."/>
        </authorList>
    </citation>
    <scope>DISULFIDE BONDS</scope>
</reference>
<reference key="3">
    <citation type="journal article" date="1970" name="FEBS Lett.">
        <title>Role of lysine 18 in active center of cow colostrum trypsin inhibitor.</title>
        <authorList>
            <person name="Cechova D."/>
            <person name="Muszynska G."/>
        </authorList>
    </citation>
    <scope>CHARACTERIZATION</scope>
</reference>
<name>IBPC_BOVIN</name>